<comment type="function">
    <text evidence="1">Might take part in the signal recognition particle (SRP) pathway. This is inferred from the conservation of its genetic proximity to ftsY/ffh. May be a regulatory protein.</text>
</comment>
<comment type="similarity">
    <text evidence="1">Belongs to the UPF0122 family.</text>
</comment>
<keyword id="KW-1185">Reference proteome</keyword>
<sequence>MTLDKTNRMNYLIDFYQELLTPKQRNYMSLYYLDDFSLGEIADEFEVSRQAVYDNIKRTEAMLEQYEERLGLFAKYEQRKLLLDQLKQLDLPSEAHVTIAALEQLE</sequence>
<feature type="chain" id="PRO_1000100812" description="UPF0122 protein Exig_1902">
    <location>
        <begin position="1"/>
        <end position="106"/>
    </location>
</feature>
<accession>B1YIM8</accession>
<gene>
    <name type="ordered locus">Exig_1902</name>
</gene>
<reference key="1">
    <citation type="submission" date="2008-04" db="EMBL/GenBank/DDBJ databases">
        <title>Complete sequence of chromosome of Exiguobacterium sibiricum 255-15.</title>
        <authorList>
            <consortium name="US DOE Joint Genome Institute"/>
            <person name="Copeland A."/>
            <person name="Lucas S."/>
            <person name="Lapidus A."/>
            <person name="Glavina del Rio T."/>
            <person name="Dalin E."/>
            <person name="Tice H."/>
            <person name="Bruce D."/>
            <person name="Goodwin L."/>
            <person name="Pitluck S."/>
            <person name="Kiss H."/>
            <person name="Chertkov O."/>
            <person name="Monk C."/>
            <person name="Brettin T."/>
            <person name="Detter J.C."/>
            <person name="Han C."/>
            <person name="Kuske C.R."/>
            <person name="Schmutz J."/>
            <person name="Larimer F."/>
            <person name="Land M."/>
            <person name="Hauser L."/>
            <person name="Kyrpides N."/>
            <person name="Mikhailova N."/>
            <person name="Vishnivetskaya T."/>
            <person name="Rodrigues D.F."/>
            <person name="Gilichinsky D."/>
            <person name="Tiedje J."/>
            <person name="Richardson P."/>
        </authorList>
    </citation>
    <scope>NUCLEOTIDE SEQUENCE [LARGE SCALE GENOMIC DNA]</scope>
    <source>
        <strain>DSM 17290 / CCUG 55495 / CIP 109462 / JCM 13490 / 255-15</strain>
    </source>
</reference>
<organism>
    <name type="scientific">Exiguobacterium sibiricum (strain DSM 17290 / CCUG 55495 / CIP 109462 / JCM 13490 / 255-15)</name>
    <dbReference type="NCBI Taxonomy" id="262543"/>
    <lineage>
        <taxon>Bacteria</taxon>
        <taxon>Bacillati</taxon>
        <taxon>Bacillota</taxon>
        <taxon>Bacilli</taxon>
        <taxon>Bacillales</taxon>
        <taxon>Bacillales Family XII. Incertae Sedis</taxon>
        <taxon>Exiguobacterium</taxon>
    </lineage>
</organism>
<protein>
    <recommendedName>
        <fullName evidence="1">UPF0122 protein Exig_1902</fullName>
    </recommendedName>
</protein>
<evidence type="ECO:0000255" key="1">
    <source>
        <dbReference type="HAMAP-Rule" id="MF_00245"/>
    </source>
</evidence>
<name>Y1902_EXIS2</name>
<proteinExistence type="inferred from homology"/>
<dbReference type="EMBL" id="CP001022">
    <property type="protein sequence ID" value="ACB61354.1"/>
    <property type="molecule type" value="Genomic_DNA"/>
</dbReference>
<dbReference type="RefSeq" id="WP_012370772.1">
    <property type="nucleotide sequence ID" value="NC_010556.1"/>
</dbReference>
<dbReference type="SMR" id="B1YIM8"/>
<dbReference type="STRING" id="262543.Exig_1902"/>
<dbReference type="KEGG" id="esi:Exig_1902"/>
<dbReference type="eggNOG" id="COG2739">
    <property type="taxonomic scope" value="Bacteria"/>
</dbReference>
<dbReference type="HOGENOM" id="CLU_129218_1_0_9"/>
<dbReference type="OrthoDB" id="6392at2"/>
<dbReference type="Proteomes" id="UP000001681">
    <property type="component" value="Chromosome"/>
</dbReference>
<dbReference type="Gene3D" id="1.10.10.10">
    <property type="entry name" value="Winged helix-like DNA-binding domain superfamily/Winged helix DNA-binding domain"/>
    <property type="match status" value="1"/>
</dbReference>
<dbReference type="HAMAP" id="MF_00245">
    <property type="entry name" value="UPF0122"/>
    <property type="match status" value="1"/>
</dbReference>
<dbReference type="InterPro" id="IPR013324">
    <property type="entry name" value="RNA_pol_sigma_r3/r4-like"/>
</dbReference>
<dbReference type="InterPro" id="IPR007394">
    <property type="entry name" value="UPF0122"/>
</dbReference>
<dbReference type="InterPro" id="IPR054831">
    <property type="entry name" value="UPF0122_fam_protein"/>
</dbReference>
<dbReference type="InterPro" id="IPR036388">
    <property type="entry name" value="WH-like_DNA-bd_sf"/>
</dbReference>
<dbReference type="NCBIfam" id="NF001068">
    <property type="entry name" value="PRK00118.1-4"/>
    <property type="match status" value="1"/>
</dbReference>
<dbReference type="NCBIfam" id="NF001070">
    <property type="entry name" value="PRK00118.1-6"/>
    <property type="match status" value="1"/>
</dbReference>
<dbReference type="NCBIfam" id="NF045758">
    <property type="entry name" value="YlxM"/>
    <property type="match status" value="1"/>
</dbReference>
<dbReference type="PANTHER" id="PTHR40083">
    <property type="entry name" value="UPF0122 PROTEIN CBO2450/CLC_2298"/>
    <property type="match status" value="1"/>
</dbReference>
<dbReference type="PANTHER" id="PTHR40083:SF1">
    <property type="entry name" value="UPF0122 PROTEIN YLXM"/>
    <property type="match status" value="1"/>
</dbReference>
<dbReference type="Pfam" id="PF04297">
    <property type="entry name" value="UPF0122"/>
    <property type="match status" value="1"/>
</dbReference>
<dbReference type="SUPFAM" id="SSF88659">
    <property type="entry name" value="Sigma3 and sigma4 domains of RNA polymerase sigma factors"/>
    <property type="match status" value="1"/>
</dbReference>